<name>IMDH_RHOBA</name>
<proteinExistence type="inferred from homology"/>
<organism>
    <name type="scientific">Rhodopirellula baltica (strain DSM 10527 / NCIMB 13988 / SH1)</name>
    <dbReference type="NCBI Taxonomy" id="243090"/>
    <lineage>
        <taxon>Bacteria</taxon>
        <taxon>Pseudomonadati</taxon>
        <taxon>Planctomycetota</taxon>
        <taxon>Planctomycetia</taxon>
        <taxon>Pirellulales</taxon>
        <taxon>Pirellulaceae</taxon>
        <taxon>Rhodopirellula</taxon>
    </lineage>
</organism>
<protein>
    <recommendedName>
        <fullName evidence="1">Inosine-5'-monophosphate dehydrogenase</fullName>
        <shortName evidence="1">IMP dehydrogenase</shortName>
        <shortName evidence="1">IMPD</shortName>
        <shortName evidence="1">IMPDH</shortName>
        <ecNumber evidence="1">1.1.1.205</ecNumber>
    </recommendedName>
</protein>
<accession>Q7UJL3</accession>
<dbReference type="EC" id="1.1.1.205" evidence="1"/>
<dbReference type="EMBL" id="BX294154">
    <property type="protein sequence ID" value="CAD77245.1"/>
    <property type="molecule type" value="Genomic_DNA"/>
</dbReference>
<dbReference type="RefSeq" id="NP_870170.1">
    <property type="nucleotide sequence ID" value="NC_005027.1"/>
</dbReference>
<dbReference type="SMR" id="Q7UJL3"/>
<dbReference type="FunCoup" id="Q7UJL3">
    <property type="interactions" value="404"/>
</dbReference>
<dbReference type="STRING" id="243090.RB11822"/>
<dbReference type="EnsemblBacteria" id="CAD77245">
    <property type="protein sequence ID" value="CAD77245"/>
    <property type="gene ID" value="RB11822"/>
</dbReference>
<dbReference type="KEGG" id="rba:RB11822"/>
<dbReference type="PATRIC" id="fig|243090.15.peg.5703"/>
<dbReference type="eggNOG" id="COG0516">
    <property type="taxonomic scope" value="Bacteria"/>
</dbReference>
<dbReference type="eggNOG" id="COG0517">
    <property type="taxonomic scope" value="Bacteria"/>
</dbReference>
<dbReference type="HOGENOM" id="CLU_022552_2_1_0"/>
<dbReference type="InParanoid" id="Q7UJL3"/>
<dbReference type="OrthoDB" id="9805398at2"/>
<dbReference type="UniPathway" id="UPA00601">
    <property type="reaction ID" value="UER00295"/>
</dbReference>
<dbReference type="Proteomes" id="UP000001025">
    <property type="component" value="Chromosome"/>
</dbReference>
<dbReference type="GO" id="GO:0003938">
    <property type="term" value="F:IMP dehydrogenase activity"/>
    <property type="evidence" value="ECO:0000318"/>
    <property type="project" value="GO_Central"/>
</dbReference>
<dbReference type="GO" id="GO:0046872">
    <property type="term" value="F:metal ion binding"/>
    <property type="evidence" value="ECO:0007669"/>
    <property type="project" value="UniProtKB-UniRule"/>
</dbReference>
<dbReference type="GO" id="GO:0000166">
    <property type="term" value="F:nucleotide binding"/>
    <property type="evidence" value="ECO:0007669"/>
    <property type="project" value="UniProtKB-UniRule"/>
</dbReference>
<dbReference type="GO" id="GO:0006177">
    <property type="term" value="P:GMP biosynthetic process"/>
    <property type="evidence" value="ECO:0007669"/>
    <property type="project" value="UniProtKB-UniRule"/>
</dbReference>
<dbReference type="GO" id="GO:0006183">
    <property type="term" value="P:GTP biosynthetic process"/>
    <property type="evidence" value="ECO:0000318"/>
    <property type="project" value="GO_Central"/>
</dbReference>
<dbReference type="CDD" id="cd04601">
    <property type="entry name" value="CBS_pair_IMPDH"/>
    <property type="match status" value="1"/>
</dbReference>
<dbReference type="CDD" id="cd00381">
    <property type="entry name" value="IMPDH"/>
    <property type="match status" value="1"/>
</dbReference>
<dbReference type="FunFam" id="3.20.20.70:FF:000003">
    <property type="entry name" value="GMP reductase"/>
    <property type="match status" value="1"/>
</dbReference>
<dbReference type="Gene3D" id="3.20.20.70">
    <property type="entry name" value="Aldolase class I"/>
    <property type="match status" value="1"/>
</dbReference>
<dbReference type="HAMAP" id="MF_01964">
    <property type="entry name" value="IMPDH"/>
    <property type="match status" value="1"/>
</dbReference>
<dbReference type="InterPro" id="IPR013785">
    <property type="entry name" value="Aldolase_TIM"/>
</dbReference>
<dbReference type="InterPro" id="IPR000644">
    <property type="entry name" value="CBS_dom"/>
</dbReference>
<dbReference type="InterPro" id="IPR046342">
    <property type="entry name" value="CBS_dom_sf"/>
</dbReference>
<dbReference type="InterPro" id="IPR005990">
    <property type="entry name" value="IMP_DH"/>
</dbReference>
<dbReference type="InterPro" id="IPR015875">
    <property type="entry name" value="IMP_DH/GMP_Rdtase_CS"/>
</dbReference>
<dbReference type="InterPro" id="IPR001093">
    <property type="entry name" value="IMP_DH_GMPRt"/>
</dbReference>
<dbReference type="NCBIfam" id="TIGR01302">
    <property type="entry name" value="IMP_dehydrog"/>
    <property type="match status" value="1"/>
</dbReference>
<dbReference type="PANTHER" id="PTHR11911:SF111">
    <property type="entry name" value="INOSINE-5'-MONOPHOSPHATE DEHYDROGENASE"/>
    <property type="match status" value="1"/>
</dbReference>
<dbReference type="PANTHER" id="PTHR11911">
    <property type="entry name" value="INOSINE-5-MONOPHOSPHATE DEHYDROGENASE RELATED"/>
    <property type="match status" value="1"/>
</dbReference>
<dbReference type="Pfam" id="PF00571">
    <property type="entry name" value="CBS"/>
    <property type="match status" value="2"/>
</dbReference>
<dbReference type="Pfam" id="PF00478">
    <property type="entry name" value="IMPDH"/>
    <property type="match status" value="1"/>
</dbReference>
<dbReference type="PIRSF" id="PIRSF000130">
    <property type="entry name" value="IMPDH"/>
    <property type="match status" value="1"/>
</dbReference>
<dbReference type="SMART" id="SM00116">
    <property type="entry name" value="CBS"/>
    <property type="match status" value="2"/>
</dbReference>
<dbReference type="SMART" id="SM01240">
    <property type="entry name" value="IMPDH"/>
    <property type="match status" value="1"/>
</dbReference>
<dbReference type="SUPFAM" id="SSF54631">
    <property type="entry name" value="CBS-domain pair"/>
    <property type="match status" value="1"/>
</dbReference>
<dbReference type="SUPFAM" id="SSF51412">
    <property type="entry name" value="Inosine monophosphate dehydrogenase (IMPDH)"/>
    <property type="match status" value="1"/>
</dbReference>
<dbReference type="PROSITE" id="PS51371">
    <property type="entry name" value="CBS"/>
    <property type="match status" value="2"/>
</dbReference>
<dbReference type="PROSITE" id="PS00487">
    <property type="entry name" value="IMP_DH_GMP_RED"/>
    <property type="match status" value="1"/>
</dbReference>
<comment type="function">
    <text evidence="1">Catalyzes the conversion of inosine 5'-phosphate (IMP) to xanthosine 5'-phosphate (XMP), the first committed and rate-limiting step in the de novo synthesis of guanine nucleotides, and therefore plays an important role in the regulation of cell growth.</text>
</comment>
<comment type="catalytic activity">
    <reaction evidence="1">
        <text>IMP + NAD(+) + H2O = XMP + NADH + H(+)</text>
        <dbReference type="Rhea" id="RHEA:11708"/>
        <dbReference type="ChEBI" id="CHEBI:15377"/>
        <dbReference type="ChEBI" id="CHEBI:15378"/>
        <dbReference type="ChEBI" id="CHEBI:57464"/>
        <dbReference type="ChEBI" id="CHEBI:57540"/>
        <dbReference type="ChEBI" id="CHEBI:57945"/>
        <dbReference type="ChEBI" id="CHEBI:58053"/>
        <dbReference type="EC" id="1.1.1.205"/>
    </reaction>
</comment>
<comment type="cofactor">
    <cofactor evidence="1">
        <name>K(+)</name>
        <dbReference type="ChEBI" id="CHEBI:29103"/>
    </cofactor>
</comment>
<comment type="activity regulation">
    <text evidence="1">Mycophenolic acid (MPA) is a non-competitive inhibitor that prevents formation of the closed enzyme conformation by binding to the same site as the amobile flap. In contrast, mizoribine monophosphate (MZP) is a competitive inhibitor that induces the closed conformation. MPA is a potent inhibitor of mammalian IMPDHs but a poor inhibitor of the bacterial enzymes. MZP is a more potent inhibitor of bacterial IMPDH.</text>
</comment>
<comment type="pathway">
    <text evidence="1">Purine metabolism; XMP biosynthesis via de novo pathway; XMP from IMP: step 1/1.</text>
</comment>
<comment type="subunit">
    <text evidence="1">Homotetramer.</text>
</comment>
<comment type="similarity">
    <text evidence="1">Belongs to the IMPDH/GMPR family.</text>
</comment>
<reference key="1">
    <citation type="journal article" date="2003" name="Proc. Natl. Acad. Sci. U.S.A.">
        <title>Complete genome sequence of the marine planctomycete Pirellula sp. strain 1.</title>
        <authorList>
            <person name="Gloeckner F.O."/>
            <person name="Kube M."/>
            <person name="Bauer M."/>
            <person name="Teeling H."/>
            <person name="Lombardot T."/>
            <person name="Ludwig W."/>
            <person name="Gade D."/>
            <person name="Beck A."/>
            <person name="Borzym K."/>
            <person name="Heitmann K."/>
            <person name="Rabus R."/>
            <person name="Schlesner H."/>
            <person name="Amann R."/>
            <person name="Reinhardt R."/>
        </authorList>
    </citation>
    <scope>NUCLEOTIDE SEQUENCE [LARGE SCALE GENOMIC DNA]</scope>
    <source>
        <strain>DSM 10527 / NCIMB 13988 / SH1</strain>
    </source>
</reference>
<evidence type="ECO:0000255" key="1">
    <source>
        <dbReference type="HAMAP-Rule" id="MF_01964"/>
    </source>
</evidence>
<evidence type="ECO:0000256" key="2">
    <source>
        <dbReference type="SAM" id="MobiDB-lite"/>
    </source>
</evidence>
<gene>
    <name evidence="1" type="primary">guaB</name>
    <name type="ordered locus">RB11822</name>
</gene>
<sequence length="539" mass="57876">MGASTRFRRQSGKVPYNSTAASVIIARFPHRITFGCPRPRGNENGMFDDKIGDLGVTFDDVLLQPRYSEVVPSEVDVSSQMTQRIRLQIPLISSPMDTVTESEMAIALAKEGGLGIVHKNLSVRRQTEEVLKVKRSANGIIVNPVTLNPAQKVSAAAELMDRANVSGIPIVEDDRTLAGILTRRDLRFLEDPDMPISQVMTRENLVTAVGNVTLAQAEKILTEKRVEKLLLIDEERKLTGLITIRDIDMMKRYPRACKDPQGRLRVGAAIGVGDYERAESLIGKGVDVLVVDSAHGHSRNVIETVREIKQNKSWDIDVVAGNVATAEGAADLIAAGADAVKVGIGPGSICTTRVISGIGVPQVTAILSAVKVAQEKNIPVIADGGIRFSGDITKAIAAGASTVMIGSLFAGLAESPGKMILYQGRTFKAYRGMGSMGAMVKGSSDRYRQKGTEAGKLVPEGVEGRVPFKGPLSDYAYQLVGGLRAGMGYVGTRTIEELRRDAKFIRVSAATVRENHPHDIAITQEAPNYSPDVHSGDAG</sequence>
<feature type="chain" id="PRO_0000415690" description="Inosine-5'-monophosphate dehydrogenase">
    <location>
        <begin position="1"/>
        <end position="539"/>
    </location>
</feature>
<feature type="domain" description="CBS 1" evidence="1">
    <location>
        <begin position="140"/>
        <end position="196"/>
    </location>
</feature>
<feature type="domain" description="CBS 2" evidence="1">
    <location>
        <begin position="200"/>
        <end position="257"/>
    </location>
</feature>
<feature type="region of interest" description="Disordered" evidence="2">
    <location>
        <begin position="517"/>
        <end position="539"/>
    </location>
</feature>
<feature type="active site" description="Thioimidate intermediate" evidence="1">
    <location>
        <position position="350"/>
    </location>
</feature>
<feature type="active site" description="Proton acceptor" evidence="1">
    <location>
        <position position="446"/>
    </location>
</feature>
<feature type="binding site" evidence="1">
    <location>
        <position position="292"/>
    </location>
    <ligand>
        <name>NAD(+)</name>
        <dbReference type="ChEBI" id="CHEBI:57540"/>
    </ligand>
</feature>
<feature type="binding site" evidence="1">
    <location>
        <begin position="343"/>
        <end position="345"/>
    </location>
    <ligand>
        <name>NAD(+)</name>
        <dbReference type="ChEBI" id="CHEBI:57540"/>
    </ligand>
</feature>
<feature type="binding site" description="in other chain" evidence="1">
    <location>
        <position position="345"/>
    </location>
    <ligand>
        <name>K(+)</name>
        <dbReference type="ChEBI" id="CHEBI:29103"/>
        <note>ligand shared between two tetrameric partners</note>
    </ligand>
</feature>
<feature type="binding site" description="in other chain" evidence="1">
    <location>
        <position position="347"/>
    </location>
    <ligand>
        <name>K(+)</name>
        <dbReference type="ChEBI" id="CHEBI:29103"/>
        <note>ligand shared between two tetrameric partners</note>
    </ligand>
</feature>
<feature type="binding site" evidence="1">
    <location>
        <position position="348"/>
    </location>
    <ligand>
        <name>IMP</name>
        <dbReference type="ChEBI" id="CHEBI:58053"/>
    </ligand>
</feature>
<feature type="binding site" description="in other chain" evidence="1">
    <location>
        <position position="350"/>
    </location>
    <ligand>
        <name>K(+)</name>
        <dbReference type="ChEBI" id="CHEBI:29103"/>
        <note>ligand shared between two tetrameric partners</note>
    </ligand>
</feature>
<feature type="binding site" evidence="1">
    <location>
        <begin position="383"/>
        <end position="385"/>
    </location>
    <ligand>
        <name>IMP</name>
        <dbReference type="ChEBI" id="CHEBI:58053"/>
    </ligand>
</feature>
<feature type="binding site" evidence="1">
    <location>
        <begin position="406"/>
        <end position="407"/>
    </location>
    <ligand>
        <name>IMP</name>
        <dbReference type="ChEBI" id="CHEBI:58053"/>
    </ligand>
</feature>
<feature type="binding site" evidence="1">
    <location>
        <begin position="430"/>
        <end position="434"/>
    </location>
    <ligand>
        <name>IMP</name>
        <dbReference type="ChEBI" id="CHEBI:58053"/>
    </ligand>
</feature>
<feature type="binding site" evidence="1">
    <location>
        <position position="460"/>
    </location>
    <ligand>
        <name>IMP</name>
        <dbReference type="ChEBI" id="CHEBI:58053"/>
    </ligand>
</feature>
<feature type="binding site" evidence="1">
    <location>
        <position position="514"/>
    </location>
    <ligand>
        <name>K(+)</name>
        <dbReference type="ChEBI" id="CHEBI:29103"/>
        <note>ligand shared between two tetrameric partners</note>
    </ligand>
</feature>
<feature type="binding site" evidence="1">
    <location>
        <position position="516"/>
    </location>
    <ligand>
        <name>K(+)</name>
        <dbReference type="ChEBI" id="CHEBI:29103"/>
        <note>ligand shared between two tetrameric partners</note>
    </ligand>
</feature>
<keyword id="KW-0129">CBS domain</keyword>
<keyword id="KW-0332">GMP biosynthesis</keyword>
<keyword id="KW-0479">Metal-binding</keyword>
<keyword id="KW-0520">NAD</keyword>
<keyword id="KW-0560">Oxidoreductase</keyword>
<keyword id="KW-0630">Potassium</keyword>
<keyword id="KW-0658">Purine biosynthesis</keyword>
<keyword id="KW-1185">Reference proteome</keyword>
<keyword id="KW-0677">Repeat</keyword>